<comment type="function">
    <text evidence="2 3">Glutathione S-transferase that catalyzes the conjugation of glutathione to exogenous and endogenous compounds (PubMed:14709161, PubMed:14742434). Significant glutathione conjugating activity is found only with the model substrate, 1-chloro-2,4-dinitrobenzene (CDNB) (PubMed:14709161).</text>
</comment>
<comment type="catalytic activity">
    <reaction evidence="2 3">
        <text>RX + glutathione = an S-substituted glutathione + a halide anion + H(+)</text>
        <dbReference type="Rhea" id="RHEA:16437"/>
        <dbReference type="ChEBI" id="CHEBI:15378"/>
        <dbReference type="ChEBI" id="CHEBI:16042"/>
        <dbReference type="ChEBI" id="CHEBI:17792"/>
        <dbReference type="ChEBI" id="CHEBI:57925"/>
        <dbReference type="ChEBI" id="CHEBI:90779"/>
        <dbReference type="EC" id="2.5.1.18"/>
    </reaction>
</comment>
<comment type="subunit">
    <text evidence="4">Homodimer.</text>
</comment>
<comment type="interaction">
    <interactant intactId="EBI-1053767">
        <id>Q9Y2Q3</id>
    </interactant>
    <interactant intactId="EBI-748961">
        <id>O95273</id>
        <label>CCNDBP1</label>
    </interactant>
    <organismsDiffer>false</organismsDiffer>
    <experiments>3</experiments>
</comment>
<comment type="interaction">
    <interactant intactId="EBI-1053767">
        <id>Q9Y2Q3</id>
    </interactant>
    <interactant intactId="EBI-10175124">
        <id>Q8IZU0</id>
        <label>FAM9B</label>
    </interactant>
    <organismsDiffer>false</organismsDiffer>
    <experiments>4</experiments>
</comment>
<comment type="interaction">
    <interactant intactId="EBI-1053767">
        <id>Q9Y2Q3</id>
    </interactant>
    <interactant intactId="EBI-7264589">
        <id>Q60994</id>
        <label>Adipoq</label>
    </interactant>
    <organismsDiffer>true</organismsDiffer>
    <experiments>2</experiments>
</comment>
<comment type="interaction">
    <interactant intactId="EBI-12013556">
        <id>Q9Y2Q3-2</id>
    </interactant>
    <interactant intactId="EBI-3044087">
        <id>Q7Z3Y8</id>
        <label>KRT27</label>
    </interactant>
    <organismsDiffer>false</organismsDiffer>
    <experiments>3</experiments>
</comment>
<comment type="subcellular location">
    <subcellularLocation>
        <location evidence="3">Peroxisome</location>
    </subcellularLocation>
</comment>
<comment type="alternative products">
    <event type="alternative splicing"/>
    <isoform>
        <id>Q9Y2Q3-1</id>
        <name>1</name>
        <sequence type="displayed"/>
    </isoform>
    <isoform>
        <id>Q9Y2Q3-2</id>
        <name>2</name>
        <sequence type="described" ref="VSP_040025"/>
    </isoform>
    <isoform>
        <id>Q9Y2Q3-3</id>
        <name>3</name>
        <sequence type="described" ref="VSP_040979"/>
    </isoform>
    <isoform>
        <id>Q9Y2Q3-4</id>
        <name>4</name>
        <sequence type="described" ref="VSP_040978"/>
    </isoform>
</comment>
<comment type="tissue specificity">
    <text evidence="3">Ubiquitous.</text>
</comment>
<comment type="similarity">
    <text evidence="7">Belongs to the GST superfamily. Kappa family.</text>
</comment>
<gene>
    <name type="primary">GSTK1</name>
    <name type="ORF">HDCMD47P</name>
</gene>
<keyword id="KW-0002">3D-structure</keyword>
<keyword id="KW-0007">Acetylation</keyword>
<keyword id="KW-0025">Alternative splicing</keyword>
<keyword id="KW-0576">Peroxisome</keyword>
<keyword id="KW-1267">Proteomics identification</keyword>
<keyword id="KW-1185">Reference proteome</keyword>
<keyword id="KW-0808">Transferase</keyword>
<organism>
    <name type="scientific">Homo sapiens</name>
    <name type="common">Human</name>
    <dbReference type="NCBI Taxonomy" id="9606"/>
    <lineage>
        <taxon>Eukaryota</taxon>
        <taxon>Metazoa</taxon>
        <taxon>Chordata</taxon>
        <taxon>Craniata</taxon>
        <taxon>Vertebrata</taxon>
        <taxon>Euteleostomi</taxon>
        <taxon>Mammalia</taxon>
        <taxon>Eutheria</taxon>
        <taxon>Euarchontoglires</taxon>
        <taxon>Primates</taxon>
        <taxon>Haplorrhini</taxon>
        <taxon>Catarrhini</taxon>
        <taxon>Hominidae</taxon>
        <taxon>Homo</taxon>
    </lineage>
</organism>
<proteinExistence type="evidence at protein level"/>
<name>GSTK1_HUMAN</name>
<evidence type="ECO:0000250" key="1">
    <source>
        <dbReference type="UniProtKB" id="Q9DCM2"/>
    </source>
</evidence>
<evidence type="ECO:0000269" key="2">
    <source>
    </source>
</evidence>
<evidence type="ECO:0000269" key="3">
    <source>
    </source>
</evidence>
<evidence type="ECO:0000269" key="4">
    <source>
    </source>
</evidence>
<evidence type="ECO:0000303" key="5">
    <source>
    </source>
</evidence>
<evidence type="ECO:0000303" key="6">
    <source>
    </source>
</evidence>
<evidence type="ECO:0000305" key="7"/>
<evidence type="ECO:0007744" key="8">
    <source>
    </source>
</evidence>
<evidence type="ECO:0007829" key="9">
    <source>
        <dbReference type="PDB" id="3RPP"/>
    </source>
</evidence>
<reference key="1">
    <citation type="journal article" date="2004" name="Biochem. J.">
        <title>Modelling and bioinformatics studies of the human kappa class glutathione transferase predict a novel third glutathione transferase family with homology to prokaryotic 2-hydroxychromene-2-carboxylate (HCCA) isomerases.</title>
        <authorList>
            <person name="Robinson A."/>
            <person name="Huttley G.A."/>
            <person name="Booth H.S."/>
            <person name="Board P.G."/>
        </authorList>
    </citation>
    <scope>NUCLEOTIDE SEQUENCE [MRNA] (ISOFORM 1)</scope>
    <scope>FUNCTION</scope>
    <scope>CATALYTIC ACTIVITY</scope>
    <source>
        <tissue>Mammary gland</tissue>
    </source>
</reference>
<reference key="2">
    <citation type="journal article" date="2004" name="J. Biol. Chem.">
        <title>Gene and protein characterization of the human glutathione S-transferase kappa and evidence for a peroxisomal localization.</title>
        <authorList>
            <person name="Morel F."/>
            <person name="Rauch C."/>
            <person name="Petit E."/>
            <person name="Piton A."/>
            <person name="Theret N."/>
            <person name="Coles B."/>
            <person name="Guillouzo A."/>
        </authorList>
    </citation>
    <scope>NUCLEOTIDE SEQUENCE [GENOMIC DNA]</scope>
    <scope>FUNCTION</scope>
    <scope>CATALYTIC ACTIVITY</scope>
    <scope>SUBCELLULAR LOCATION</scope>
    <scope>TISSUE SPECIFICITY</scope>
</reference>
<reference key="3">
    <citation type="journal article" date="2000" name="Genome Res.">
        <title>Cloning and functional analysis of cDNAs with open reading frames for 300 previously undefined genes expressed in CD34+ hematopoietic stem/progenitor cells.</title>
        <authorList>
            <person name="Zhang Q.-H."/>
            <person name="Ye M."/>
            <person name="Wu X.-Y."/>
            <person name="Ren S.-X."/>
            <person name="Zhao M."/>
            <person name="Zhao C.-J."/>
            <person name="Fu G."/>
            <person name="Shen Y."/>
            <person name="Fan H.-Y."/>
            <person name="Lu G."/>
            <person name="Zhong M."/>
            <person name="Xu X.-R."/>
            <person name="Han Z.-G."/>
            <person name="Zhang J.-W."/>
            <person name="Tao J."/>
            <person name="Huang Q.-H."/>
            <person name="Zhou J."/>
            <person name="Hu G.-X."/>
            <person name="Gu J."/>
            <person name="Chen S.-J."/>
            <person name="Chen Z."/>
        </authorList>
    </citation>
    <scope>NUCLEOTIDE SEQUENCE [LARGE SCALE MRNA] (ISOFORM 1)</scope>
    <source>
        <tissue>Umbilical cord blood</tissue>
    </source>
</reference>
<reference key="4">
    <citation type="submission" date="1998-05" db="EMBL/GenBank/DDBJ databases">
        <title>A novel gene from human dendritic cell.</title>
        <authorList>
            <person name="Zhao Z."/>
            <person name="Huang X."/>
            <person name="Li N."/>
            <person name="Zhu X."/>
            <person name="Cao X."/>
        </authorList>
    </citation>
    <scope>NUCLEOTIDE SEQUENCE [LARGE SCALE MRNA] (ISOFORM 1)</scope>
    <source>
        <tissue>Dendritic cell</tissue>
    </source>
</reference>
<reference key="5">
    <citation type="submission" date="1998-08" db="EMBL/GenBank/DDBJ databases">
        <title>Cloning of a novel human cDNA homologous to rats rGSTK1-1 mRNA.</title>
        <authorList>
            <person name="Zhang M."/>
            <person name="Yu L."/>
            <person name="Zhou Y."/>
            <person name="Hu P.R."/>
            <person name="Xin Y.R."/>
            <person name="Zhao S.Y."/>
        </authorList>
    </citation>
    <scope>NUCLEOTIDE SEQUENCE [MRNA] (ISOFORM 1)</scope>
</reference>
<reference key="6">
    <citation type="journal article" date="2004" name="Nat. Genet.">
        <title>Complete sequencing and characterization of 21,243 full-length human cDNAs.</title>
        <authorList>
            <person name="Ota T."/>
            <person name="Suzuki Y."/>
            <person name="Nishikawa T."/>
            <person name="Otsuki T."/>
            <person name="Sugiyama T."/>
            <person name="Irie R."/>
            <person name="Wakamatsu A."/>
            <person name="Hayashi K."/>
            <person name="Sato H."/>
            <person name="Nagai K."/>
            <person name="Kimura K."/>
            <person name="Makita H."/>
            <person name="Sekine M."/>
            <person name="Obayashi M."/>
            <person name="Nishi T."/>
            <person name="Shibahara T."/>
            <person name="Tanaka T."/>
            <person name="Ishii S."/>
            <person name="Yamamoto J."/>
            <person name="Saito K."/>
            <person name="Kawai Y."/>
            <person name="Isono Y."/>
            <person name="Nakamura Y."/>
            <person name="Nagahari K."/>
            <person name="Murakami K."/>
            <person name="Yasuda T."/>
            <person name="Iwayanagi T."/>
            <person name="Wagatsuma M."/>
            <person name="Shiratori A."/>
            <person name="Sudo H."/>
            <person name="Hosoiri T."/>
            <person name="Kaku Y."/>
            <person name="Kodaira H."/>
            <person name="Kondo H."/>
            <person name="Sugawara M."/>
            <person name="Takahashi M."/>
            <person name="Kanda K."/>
            <person name="Yokoi T."/>
            <person name="Furuya T."/>
            <person name="Kikkawa E."/>
            <person name="Omura Y."/>
            <person name="Abe K."/>
            <person name="Kamihara K."/>
            <person name="Katsuta N."/>
            <person name="Sato K."/>
            <person name="Tanikawa M."/>
            <person name="Yamazaki M."/>
            <person name="Ninomiya K."/>
            <person name="Ishibashi T."/>
            <person name="Yamashita H."/>
            <person name="Murakawa K."/>
            <person name="Fujimori K."/>
            <person name="Tanai H."/>
            <person name="Kimata M."/>
            <person name="Watanabe M."/>
            <person name="Hiraoka S."/>
            <person name="Chiba Y."/>
            <person name="Ishida S."/>
            <person name="Ono Y."/>
            <person name="Takiguchi S."/>
            <person name="Watanabe S."/>
            <person name="Yosida M."/>
            <person name="Hotuta T."/>
            <person name="Kusano J."/>
            <person name="Kanehori K."/>
            <person name="Takahashi-Fujii A."/>
            <person name="Hara H."/>
            <person name="Tanase T.-O."/>
            <person name="Nomura Y."/>
            <person name="Togiya S."/>
            <person name="Komai F."/>
            <person name="Hara R."/>
            <person name="Takeuchi K."/>
            <person name="Arita M."/>
            <person name="Imose N."/>
            <person name="Musashino K."/>
            <person name="Yuuki H."/>
            <person name="Oshima A."/>
            <person name="Sasaki N."/>
            <person name="Aotsuka S."/>
            <person name="Yoshikawa Y."/>
            <person name="Matsunawa H."/>
            <person name="Ichihara T."/>
            <person name="Shiohata N."/>
            <person name="Sano S."/>
            <person name="Moriya S."/>
            <person name="Momiyama H."/>
            <person name="Satoh N."/>
            <person name="Takami S."/>
            <person name="Terashima Y."/>
            <person name="Suzuki O."/>
            <person name="Nakagawa S."/>
            <person name="Senoh A."/>
            <person name="Mizoguchi H."/>
            <person name="Goto Y."/>
            <person name="Shimizu F."/>
            <person name="Wakebe H."/>
            <person name="Hishigaki H."/>
            <person name="Watanabe T."/>
            <person name="Sugiyama A."/>
            <person name="Takemoto M."/>
            <person name="Kawakami B."/>
            <person name="Yamazaki M."/>
            <person name="Watanabe K."/>
            <person name="Kumagai A."/>
            <person name="Itakura S."/>
            <person name="Fukuzumi Y."/>
            <person name="Fujimori Y."/>
            <person name="Komiyama M."/>
            <person name="Tashiro H."/>
            <person name="Tanigami A."/>
            <person name="Fujiwara T."/>
            <person name="Ono T."/>
            <person name="Yamada K."/>
            <person name="Fujii Y."/>
            <person name="Ozaki K."/>
            <person name="Hirao M."/>
            <person name="Ohmori Y."/>
            <person name="Kawabata A."/>
            <person name="Hikiji T."/>
            <person name="Kobatake N."/>
            <person name="Inagaki H."/>
            <person name="Ikema Y."/>
            <person name="Okamoto S."/>
            <person name="Okitani R."/>
            <person name="Kawakami T."/>
            <person name="Noguchi S."/>
            <person name="Itoh T."/>
            <person name="Shigeta K."/>
            <person name="Senba T."/>
            <person name="Matsumura K."/>
            <person name="Nakajima Y."/>
            <person name="Mizuno T."/>
            <person name="Morinaga M."/>
            <person name="Sasaki M."/>
            <person name="Togashi T."/>
            <person name="Oyama M."/>
            <person name="Hata H."/>
            <person name="Watanabe M."/>
            <person name="Komatsu T."/>
            <person name="Mizushima-Sugano J."/>
            <person name="Satoh T."/>
            <person name="Shirai Y."/>
            <person name="Takahashi Y."/>
            <person name="Nakagawa K."/>
            <person name="Okumura K."/>
            <person name="Nagase T."/>
            <person name="Nomura N."/>
            <person name="Kikuchi H."/>
            <person name="Masuho Y."/>
            <person name="Yamashita R."/>
            <person name="Nakai K."/>
            <person name="Yada T."/>
            <person name="Nakamura Y."/>
            <person name="Ohara O."/>
            <person name="Isogai T."/>
            <person name="Sugano S."/>
        </authorList>
    </citation>
    <scope>NUCLEOTIDE SEQUENCE [LARGE SCALE MRNA] (ISOFORMS 2; 3 AND 4)</scope>
    <source>
        <tissue>Cerebellum</tissue>
        <tissue>Hippocampus</tissue>
    </source>
</reference>
<reference key="7">
    <citation type="journal article" date="2003" name="Nature">
        <title>The DNA sequence of human chromosome 7.</title>
        <authorList>
            <person name="Hillier L.W."/>
            <person name="Fulton R.S."/>
            <person name="Fulton L.A."/>
            <person name="Graves T.A."/>
            <person name="Pepin K.H."/>
            <person name="Wagner-McPherson C."/>
            <person name="Layman D."/>
            <person name="Maas J."/>
            <person name="Jaeger S."/>
            <person name="Walker R."/>
            <person name="Wylie K."/>
            <person name="Sekhon M."/>
            <person name="Becker M.C."/>
            <person name="O'Laughlin M.D."/>
            <person name="Schaller M.E."/>
            <person name="Fewell G.A."/>
            <person name="Delehaunty K.D."/>
            <person name="Miner T.L."/>
            <person name="Nash W.E."/>
            <person name="Cordes M."/>
            <person name="Du H."/>
            <person name="Sun H."/>
            <person name="Edwards J."/>
            <person name="Bradshaw-Cordum H."/>
            <person name="Ali J."/>
            <person name="Andrews S."/>
            <person name="Isak A."/>
            <person name="Vanbrunt A."/>
            <person name="Nguyen C."/>
            <person name="Du F."/>
            <person name="Lamar B."/>
            <person name="Courtney L."/>
            <person name="Kalicki J."/>
            <person name="Ozersky P."/>
            <person name="Bielicki L."/>
            <person name="Scott K."/>
            <person name="Holmes A."/>
            <person name="Harkins R."/>
            <person name="Harris A."/>
            <person name="Strong C.M."/>
            <person name="Hou S."/>
            <person name="Tomlinson C."/>
            <person name="Dauphin-Kohlberg S."/>
            <person name="Kozlowicz-Reilly A."/>
            <person name="Leonard S."/>
            <person name="Rohlfing T."/>
            <person name="Rock S.M."/>
            <person name="Tin-Wollam A.-M."/>
            <person name="Abbott A."/>
            <person name="Minx P."/>
            <person name="Maupin R."/>
            <person name="Strowmatt C."/>
            <person name="Latreille P."/>
            <person name="Miller N."/>
            <person name="Johnson D."/>
            <person name="Murray J."/>
            <person name="Woessner J.P."/>
            <person name="Wendl M.C."/>
            <person name="Yang S.-P."/>
            <person name="Schultz B.R."/>
            <person name="Wallis J.W."/>
            <person name="Spieth J."/>
            <person name="Bieri T.A."/>
            <person name="Nelson J.O."/>
            <person name="Berkowicz N."/>
            <person name="Wohldmann P.E."/>
            <person name="Cook L.L."/>
            <person name="Hickenbotham M.T."/>
            <person name="Eldred J."/>
            <person name="Williams D."/>
            <person name="Bedell J.A."/>
            <person name="Mardis E.R."/>
            <person name="Clifton S.W."/>
            <person name="Chissoe S.L."/>
            <person name="Marra M.A."/>
            <person name="Raymond C."/>
            <person name="Haugen E."/>
            <person name="Gillett W."/>
            <person name="Zhou Y."/>
            <person name="James R."/>
            <person name="Phelps K."/>
            <person name="Iadanoto S."/>
            <person name="Bubb K."/>
            <person name="Simms E."/>
            <person name="Levy R."/>
            <person name="Clendenning J."/>
            <person name="Kaul R."/>
            <person name="Kent W.J."/>
            <person name="Furey T.S."/>
            <person name="Baertsch R.A."/>
            <person name="Brent M.R."/>
            <person name="Keibler E."/>
            <person name="Flicek P."/>
            <person name="Bork P."/>
            <person name="Suyama M."/>
            <person name="Bailey J.A."/>
            <person name="Portnoy M.E."/>
            <person name="Torrents D."/>
            <person name="Chinwalla A.T."/>
            <person name="Gish W.R."/>
            <person name="Eddy S.R."/>
            <person name="McPherson J.D."/>
            <person name="Olson M.V."/>
            <person name="Eichler E.E."/>
            <person name="Green E.D."/>
            <person name="Waterston R.H."/>
            <person name="Wilson R.K."/>
        </authorList>
    </citation>
    <scope>NUCLEOTIDE SEQUENCE [LARGE SCALE GENOMIC DNA]</scope>
</reference>
<reference key="8">
    <citation type="submission" date="2005-09" db="EMBL/GenBank/DDBJ databases">
        <authorList>
            <person name="Mural R.J."/>
            <person name="Istrail S."/>
            <person name="Sutton G.G."/>
            <person name="Florea L."/>
            <person name="Halpern A.L."/>
            <person name="Mobarry C.M."/>
            <person name="Lippert R."/>
            <person name="Walenz B."/>
            <person name="Shatkay H."/>
            <person name="Dew I."/>
            <person name="Miller J.R."/>
            <person name="Flanigan M.J."/>
            <person name="Edwards N.J."/>
            <person name="Bolanos R."/>
            <person name="Fasulo D."/>
            <person name="Halldorsson B.V."/>
            <person name="Hannenhalli S."/>
            <person name="Turner R."/>
            <person name="Yooseph S."/>
            <person name="Lu F."/>
            <person name="Nusskern D.R."/>
            <person name="Shue B.C."/>
            <person name="Zheng X.H."/>
            <person name="Zhong F."/>
            <person name="Delcher A.L."/>
            <person name="Huson D.H."/>
            <person name="Kravitz S.A."/>
            <person name="Mouchard L."/>
            <person name="Reinert K."/>
            <person name="Remington K.A."/>
            <person name="Clark A.G."/>
            <person name="Waterman M.S."/>
            <person name="Eichler E.E."/>
            <person name="Adams M.D."/>
            <person name="Hunkapiller M.W."/>
            <person name="Myers E.W."/>
            <person name="Venter J.C."/>
        </authorList>
    </citation>
    <scope>NUCLEOTIDE SEQUENCE [LARGE SCALE GENOMIC DNA]</scope>
</reference>
<reference key="9">
    <citation type="journal article" date="2001" name="Genome Res.">
        <title>Towards a catalog of human genes and proteins: sequencing and analysis of 500 novel complete protein coding human cDNAs.</title>
        <authorList>
            <person name="Wiemann S."/>
            <person name="Weil B."/>
            <person name="Wellenreuther R."/>
            <person name="Gassenhuber J."/>
            <person name="Glassl S."/>
            <person name="Ansorge W."/>
            <person name="Boecher M."/>
            <person name="Bloecker H."/>
            <person name="Bauersachs S."/>
            <person name="Blum H."/>
            <person name="Lauber J."/>
            <person name="Duesterhoeft A."/>
            <person name="Beyer A."/>
            <person name="Koehrer K."/>
            <person name="Strack N."/>
            <person name="Mewes H.-W."/>
            <person name="Ottenwaelder B."/>
            <person name="Obermaier B."/>
            <person name="Tampe J."/>
            <person name="Heubner D."/>
            <person name="Wambutt R."/>
            <person name="Korn B."/>
            <person name="Klein M."/>
            <person name="Poustka A."/>
        </authorList>
    </citation>
    <scope>NUCLEOTIDE SEQUENCE [LARGE SCALE MRNA] (ISOFORM 1)</scope>
    <source>
        <tissue>Uterus</tissue>
    </source>
</reference>
<reference key="10">
    <citation type="journal article" date="2004" name="Genome Res.">
        <title>The status, quality, and expansion of the NIH full-length cDNA project: the Mammalian Gene Collection (MGC).</title>
        <authorList>
            <consortium name="The MGC Project Team"/>
        </authorList>
    </citation>
    <scope>NUCLEOTIDE SEQUENCE [LARGE SCALE MRNA] (ISOFORMS 1 AND 2)</scope>
    <source>
        <tissue>Blood</tissue>
        <tissue>Cervix</tissue>
        <tissue>Pancreas</tissue>
    </source>
</reference>
<reference key="11">
    <citation type="journal article" date="2009" name="Science">
        <title>Lysine acetylation targets protein complexes and co-regulates major cellular functions.</title>
        <authorList>
            <person name="Choudhary C."/>
            <person name="Kumar C."/>
            <person name="Gnad F."/>
            <person name="Nielsen M.L."/>
            <person name="Rehman M."/>
            <person name="Walther T.C."/>
            <person name="Olsen J.V."/>
            <person name="Mann M."/>
        </authorList>
    </citation>
    <scope>ACETYLATION [LARGE SCALE ANALYSIS] AT LYS-71 AND LYS-169</scope>
    <scope>IDENTIFICATION BY MASS SPECTROMETRY [LARGE SCALE ANALYSIS]</scope>
</reference>
<reference key="12">
    <citation type="journal article" date="2011" name="BMC Syst. Biol.">
        <title>Initial characterization of the human central proteome.</title>
        <authorList>
            <person name="Burkard T.R."/>
            <person name="Planyavsky M."/>
            <person name="Kaupe I."/>
            <person name="Breitwieser F.P."/>
            <person name="Buerckstuemmer T."/>
            <person name="Bennett K.L."/>
            <person name="Superti-Furga G."/>
            <person name="Colinge J."/>
        </authorList>
    </citation>
    <scope>IDENTIFICATION BY MASS SPECTROMETRY [LARGE SCALE ANALYSIS]</scope>
</reference>
<reference key="13">
    <citation type="journal article" date="2014" name="J. Proteomics">
        <title>An enzyme assisted RP-RPLC approach for in-depth analysis of human liver phosphoproteome.</title>
        <authorList>
            <person name="Bian Y."/>
            <person name="Song C."/>
            <person name="Cheng K."/>
            <person name="Dong M."/>
            <person name="Wang F."/>
            <person name="Huang J."/>
            <person name="Sun D."/>
            <person name="Wang L."/>
            <person name="Ye M."/>
            <person name="Zou H."/>
        </authorList>
    </citation>
    <scope>IDENTIFICATION BY MASS SPECTROMETRY [LARGE SCALE ANALYSIS]</scope>
    <source>
        <tissue>Liver</tissue>
    </source>
</reference>
<reference key="14">
    <citation type="journal article" date="2015" name="Proteomics">
        <title>N-terminome analysis of the human mitochondrial proteome.</title>
        <authorList>
            <person name="Vaca Jacome A.S."/>
            <person name="Rabilloud T."/>
            <person name="Schaeffer-Reiss C."/>
            <person name="Rompais M."/>
            <person name="Ayoub D."/>
            <person name="Lane L."/>
            <person name="Bairoch A."/>
            <person name="Van Dorsselaer A."/>
            <person name="Carapito C."/>
        </authorList>
    </citation>
    <scope>IDENTIFICATION BY MASS SPECTROMETRY [LARGE SCALE ANALYSIS]</scope>
</reference>
<reference key="15">
    <citation type="journal article" date="2005" name="Protein Sci.">
        <title>Thioredoxin-like domain of human kappa class glutathione transferase reveals sequence homology and structure similarity to the theta class enzyme.</title>
        <authorList>
            <person name="Li J."/>
            <person name="Xia Z."/>
            <person name="Ding J."/>
        </authorList>
    </citation>
    <scope>X-RAY CRYSTALLOGRAPHY (1.93 ANGSTROMS) IN COMPLEX WITH GLUTATHIONE</scope>
    <scope>SUBUNIT</scope>
</reference>
<dbReference type="EC" id="2.5.1.18" evidence="2 3"/>
<dbReference type="EMBL" id="AY520571">
    <property type="protein sequence ID" value="AAS00610.1"/>
    <property type="molecule type" value="mRNA"/>
</dbReference>
<dbReference type="EMBL" id="AY486465">
    <property type="protein sequence ID" value="AAS01180.1"/>
    <property type="molecule type" value="Genomic_DNA"/>
</dbReference>
<dbReference type="EMBL" id="AF070657">
    <property type="protein sequence ID" value="AAD20963.1"/>
    <property type="molecule type" value="mRNA"/>
</dbReference>
<dbReference type="EMBL" id="AF068287">
    <property type="protein sequence ID" value="AAF65506.1"/>
    <property type="molecule type" value="mRNA"/>
</dbReference>
<dbReference type="EMBL" id="AF087849">
    <property type="protein sequence ID" value="AAP97160.1"/>
    <property type="molecule type" value="mRNA"/>
</dbReference>
<dbReference type="EMBL" id="AL136938">
    <property type="protein sequence ID" value="CAB66872.1"/>
    <property type="molecule type" value="mRNA"/>
</dbReference>
<dbReference type="EMBL" id="AK289570">
    <property type="protein sequence ID" value="BAF82259.1"/>
    <property type="molecule type" value="mRNA"/>
</dbReference>
<dbReference type="EMBL" id="AK295592">
    <property type="protein sequence ID" value="BAG58483.1"/>
    <property type="molecule type" value="mRNA"/>
</dbReference>
<dbReference type="EMBL" id="AK299968">
    <property type="protein sequence ID" value="BAG61794.1"/>
    <property type="molecule type" value="mRNA"/>
</dbReference>
<dbReference type="EMBL" id="AC073342">
    <property type="status" value="NOT_ANNOTATED_CDS"/>
    <property type="molecule type" value="Genomic_DNA"/>
</dbReference>
<dbReference type="EMBL" id="CH471198">
    <property type="protein sequence ID" value="EAW51877.1"/>
    <property type="molecule type" value="Genomic_DNA"/>
</dbReference>
<dbReference type="EMBL" id="BC001231">
    <property type="protein sequence ID" value="AAH01231.1"/>
    <property type="molecule type" value="mRNA"/>
</dbReference>
<dbReference type="EMBL" id="BC050715">
    <property type="protein sequence ID" value="AAH50715.1"/>
    <property type="molecule type" value="mRNA"/>
</dbReference>
<dbReference type="EMBL" id="BC063425">
    <property type="protein sequence ID" value="AAH63425.1"/>
    <property type="molecule type" value="mRNA"/>
</dbReference>
<dbReference type="CCDS" id="CCDS47730.1">
    <molecule id="Q9Y2Q3-2"/>
</dbReference>
<dbReference type="CCDS" id="CCDS47731.1">
    <molecule id="Q9Y2Q3-3"/>
</dbReference>
<dbReference type="CCDS" id="CCDS47732.1">
    <molecule id="Q9Y2Q3-4"/>
</dbReference>
<dbReference type="CCDS" id="CCDS5877.1">
    <molecule id="Q9Y2Q3-1"/>
</dbReference>
<dbReference type="RefSeq" id="NP_001137151.1">
    <molecule id="Q9Y2Q3-2"/>
    <property type="nucleotide sequence ID" value="NM_001143679.2"/>
</dbReference>
<dbReference type="RefSeq" id="NP_001137152.1">
    <molecule id="Q9Y2Q3-3"/>
    <property type="nucleotide sequence ID" value="NM_001143680.2"/>
</dbReference>
<dbReference type="RefSeq" id="NP_001137153.1">
    <molecule id="Q9Y2Q3-4"/>
    <property type="nucleotide sequence ID" value="NM_001143681.2"/>
</dbReference>
<dbReference type="RefSeq" id="NP_057001.1">
    <molecule id="Q9Y2Q3-1"/>
    <property type="nucleotide sequence ID" value="NM_015917.3"/>
</dbReference>
<dbReference type="PDB" id="1YZX">
    <property type="method" value="X-ray"/>
    <property type="resolution" value="1.93 A"/>
    <property type="chains" value="A/B=1-226"/>
</dbReference>
<dbReference type="PDB" id="3RPN">
    <property type="method" value="X-ray"/>
    <property type="resolution" value="1.90 A"/>
    <property type="chains" value="A/B/C/D/E/F=1-226"/>
</dbReference>
<dbReference type="PDB" id="3RPP">
    <property type="method" value="X-ray"/>
    <property type="resolution" value="1.80 A"/>
    <property type="chains" value="A/B/C=1-226"/>
</dbReference>
<dbReference type="PDBsum" id="1YZX"/>
<dbReference type="PDBsum" id="3RPN"/>
<dbReference type="PDBsum" id="3RPP"/>
<dbReference type="SMR" id="Q9Y2Q3"/>
<dbReference type="BioGRID" id="131875">
    <property type="interactions" value="147"/>
</dbReference>
<dbReference type="DIP" id="DIP-46924N"/>
<dbReference type="FunCoup" id="Q9Y2Q3">
    <property type="interactions" value="597"/>
</dbReference>
<dbReference type="IntAct" id="Q9Y2Q3">
    <property type="interactions" value="56"/>
</dbReference>
<dbReference type="MINT" id="Q9Y2Q3"/>
<dbReference type="STRING" id="9606.ENSP00000431049"/>
<dbReference type="BindingDB" id="Q9Y2Q3"/>
<dbReference type="ChEMBL" id="CHEMBL4491"/>
<dbReference type="DrugBank" id="DB00143">
    <property type="generic name" value="Glutathione"/>
</dbReference>
<dbReference type="DrugBank" id="DB04700">
    <property type="generic name" value="GLUTATHIONE SULFINATE"/>
</dbReference>
<dbReference type="DrugCentral" id="Q9Y2Q3"/>
<dbReference type="GlyGen" id="Q9Y2Q3">
    <property type="glycosylation" value="2 sites, 1 O-linked glycan (1 site)"/>
</dbReference>
<dbReference type="iPTMnet" id="Q9Y2Q3"/>
<dbReference type="MetOSite" id="Q9Y2Q3"/>
<dbReference type="PhosphoSitePlus" id="Q9Y2Q3"/>
<dbReference type="SwissPalm" id="Q9Y2Q3"/>
<dbReference type="BioMuta" id="GSTK1"/>
<dbReference type="DMDM" id="12643338"/>
<dbReference type="jPOST" id="Q9Y2Q3"/>
<dbReference type="MassIVE" id="Q9Y2Q3"/>
<dbReference type="PeptideAtlas" id="Q9Y2Q3"/>
<dbReference type="ProteomicsDB" id="85865">
    <molecule id="Q9Y2Q3-1"/>
</dbReference>
<dbReference type="ProteomicsDB" id="85866">
    <molecule id="Q9Y2Q3-2"/>
</dbReference>
<dbReference type="ProteomicsDB" id="85867">
    <molecule id="Q9Y2Q3-3"/>
</dbReference>
<dbReference type="ProteomicsDB" id="85868">
    <molecule id="Q9Y2Q3-4"/>
</dbReference>
<dbReference type="Pumba" id="Q9Y2Q3"/>
<dbReference type="TopDownProteomics" id="Q9Y2Q3-1">
    <molecule id="Q9Y2Q3-1"/>
</dbReference>
<dbReference type="TopDownProteomics" id="Q9Y2Q3-2">
    <molecule id="Q9Y2Q3-2"/>
</dbReference>
<dbReference type="TopDownProteomics" id="Q9Y2Q3-4">
    <molecule id="Q9Y2Q3-4"/>
</dbReference>
<dbReference type="Antibodypedia" id="1607">
    <property type="antibodies" value="376 antibodies from 35 providers"/>
</dbReference>
<dbReference type="DNASU" id="373156"/>
<dbReference type="Ensembl" id="ENST00000358406.10">
    <molecule id="Q9Y2Q3-1"/>
    <property type="protein sequence ID" value="ENSP00000351181.5"/>
    <property type="gene ID" value="ENSG00000197448.14"/>
</dbReference>
<dbReference type="Ensembl" id="ENST00000409500.7">
    <molecule id="Q9Y2Q3-3"/>
    <property type="protein sequence ID" value="ENSP00000386944.3"/>
    <property type="gene ID" value="ENSG00000197448.14"/>
</dbReference>
<dbReference type="Ensembl" id="ENST00000443571.6">
    <molecule id="Q9Y2Q3-4"/>
    <property type="protein sequence ID" value="ENSP00000415813.2"/>
    <property type="gene ID" value="ENSG00000197448.14"/>
</dbReference>
<dbReference type="Ensembl" id="ENST00000479303.1">
    <molecule id="Q9Y2Q3-2"/>
    <property type="protein sequence ID" value="ENSP00000431049.1"/>
    <property type="gene ID" value="ENSG00000197448.14"/>
</dbReference>
<dbReference type="GeneID" id="373156"/>
<dbReference type="KEGG" id="hsa:373156"/>
<dbReference type="MANE-Select" id="ENST00000358406.10">
    <property type="protein sequence ID" value="ENSP00000351181.5"/>
    <property type="RefSeq nucleotide sequence ID" value="NM_015917.3"/>
    <property type="RefSeq protein sequence ID" value="NP_057001.1"/>
</dbReference>
<dbReference type="UCSC" id="uc003wci.4">
    <molecule id="Q9Y2Q3-1"/>
    <property type="organism name" value="human"/>
</dbReference>
<dbReference type="AGR" id="HGNC:16906"/>
<dbReference type="CTD" id="373156"/>
<dbReference type="DisGeNET" id="373156"/>
<dbReference type="GeneCards" id="GSTK1"/>
<dbReference type="HGNC" id="HGNC:16906">
    <property type="gene designation" value="GSTK1"/>
</dbReference>
<dbReference type="HPA" id="ENSG00000197448">
    <property type="expression patterns" value="Low tissue specificity"/>
</dbReference>
<dbReference type="MIM" id="602321">
    <property type="type" value="gene"/>
</dbReference>
<dbReference type="neXtProt" id="NX_Q9Y2Q3"/>
<dbReference type="OpenTargets" id="ENSG00000197448"/>
<dbReference type="PharmGKB" id="PA134948237"/>
<dbReference type="VEuPathDB" id="HostDB:ENSG00000197448"/>
<dbReference type="GeneTree" id="ENSGT00440000033697"/>
<dbReference type="HOGENOM" id="CLU_069253_1_1_1"/>
<dbReference type="InParanoid" id="Q9Y2Q3"/>
<dbReference type="OMA" id="ECTNSKG"/>
<dbReference type="OrthoDB" id="4664297at2759"/>
<dbReference type="PAN-GO" id="Q9Y2Q3">
    <property type="GO annotations" value="5 GO annotations based on evolutionary models"/>
</dbReference>
<dbReference type="PhylomeDB" id="Q9Y2Q3"/>
<dbReference type="TreeFam" id="TF105323"/>
<dbReference type="PathwayCommons" id="Q9Y2Q3"/>
<dbReference type="Reactome" id="R-HSA-156590">
    <property type="pathway name" value="Glutathione conjugation"/>
</dbReference>
<dbReference type="Reactome" id="R-HSA-9033241">
    <property type="pathway name" value="Peroxisomal protein import"/>
</dbReference>
<dbReference type="SignaLink" id="Q9Y2Q3"/>
<dbReference type="BioGRID-ORCS" id="373156">
    <property type="hits" value="10 hits in 1156 CRISPR screens"/>
</dbReference>
<dbReference type="CD-CODE" id="FB4E32DD">
    <property type="entry name" value="Presynaptic clusters and postsynaptic densities"/>
</dbReference>
<dbReference type="ChiTaRS" id="GSTK1">
    <property type="organism name" value="human"/>
</dbReference>
<dbReference type="EvolutionaryTrace" id="Q9Y2Q3"/>
<dbReference type="GeneWiki" id="GSTK1"/>
<dbReference type="GenomeRNAi" id="373156"/>
<dbReference type="Pharos" id="Q9Y2Q3">
    <property type="development level" value="Tchem"/>
</dbReference>
<dbReference type="PRO" id="PR:Q9Y2Q3"/>
<dbReference type="Proteomes" id="UP000005640">
    <property type="component" value="Chromosome 7"/>
</dbReference>
<dbReference type="RNAct" id="Q9Y2Q3">
    <property type="molecule type" value="protein"/>
</dbReference>
<dbReference type="Bgee" id="ENSG00000197448">
    <property type="expression patterns" value="Expressed in granulocyte and 203 other cell types or tissues"/>
</dbReference>
<dbReference type="ExpressionAtlas" id="Q9Y2Q3">
    <property type="expression patterns" value="baseline and differential"/>
</dbReference>
<dbReference type="GO" id="GO:0005829">
    <property type="term" value="C:cytosol"/>
    <property type="evidence" value="ECO:0000304"/>
    <property type="project" value="Reactome"/>
</dbReference>
<dbReference type="GO" id="GO:0070062">
    <property type="term" value="C:extracellular exosome"/>
    <property type="evidence" value="ECO:0007005"/>
    <property type="project" value="UniProtKB"/>
</dbReference>
<dbReference type="GO" id="GO:0016020">
    <property type="term" value="C:membrane"/>
    <property type="evidence" value="ECO:0007005"/>
    <property type="project" value="UniProtKB"/>
</dbReference>
<dbReference type="GO" id="GO:0005759">
    <property type="term" value="C:mitochondrial matrix"/>
    <property type="evidence" value="ECO:0000304"/>
    <property type="project" value="Reactome"/>
</dbReference>
<dbReference type="GO" id="GO:0005739">
    <property type="term" value="C:mitochondrion"/>
    <property type="evidence" value="ECO:0006056"/>
    <property type="project" value="FlyBase"/>
</dbReference>
<dbReference type="GO" id="GO:0005782">
    <property type="term" value="C:peroxisomal matrix"/>
    <property type="evidence" value="ECO:0000304"/>
    <property type="project" value="Reactome"/>
</dbReference>
<dbReference type="GO" id="GO:0005777">
    <property type="term" value="C:peroxisome"/>
    <property type="evidence" value="ECO:0000314"/>
    <property type="project" value="HPA"/>
</dbReference>
<dbReference type="GO" id="GO:0004602">
    <property type="term" value="F:glutathione peroxidase activity"/>
    <property type="evidence" value="ECO:0000314"/>
    <property type="project" value="UniProtKB"/>
</dbReference>
<dbReference type="GO" id="GO:0004364">
    <property type="term" value="F:glutathione transferase activity"/>
    <property type="evidence" value="ECO:0000314"/>
    <property type="project" value="UniProtKB"/>
</dbReference>
<dbReference type="GO" id="GO:0030855">
    <property type="term" value="P:epithelial cell differentiation"/>
    <property type="evidence" value="ECO:0000270"/>
    <property type="project" value="UniProtKB"/>
</dbReference>
<dbReference type="GO" id="GO:0006749">
    <property type="term" value="P:glutathione metabolic process"/>
    <property type="evidence" value="ECO:0000318"/>
    <property type="project" value="GO_Central"/>
</dbReference>
<dbReference type="CDD" id="cd03021">
    <property type="entry name" value="DsbA_GSTK"/>
    <property type="match status" value="1"/>
</dbReference>
<dbReference type="FunFam" id="3.40.30.10:FF:000096">
    <property type="entry name" value="Glutathione S-transferase kappa"/>
    <property type="match status" value="1"/>
</dbReference>
<dbReference type="Gene3D" id="3.40.30.10">
    <property type="entry name" value="Glutaredoxin"/>
    <property type="match status" value="1"/>
</dbReference>
<dbReference type="InterPro" id="IPR001853">
    <property type="entry name" value="DSBA-like_thioredoxin_dom"/>
</dbReference>
<dbReference type="InterPro" id="IPR051924">
    <property type="entry name" value="GST_Kappa/NadH"/>
</dbReference>
<dbReference type="InterPro" id="IPR044088">
    <property type="entry name" value="GSTK"/>
</dbReference>
<dbReference type="InterPro" id="IPR014440">
    <property type="entry name" value="HCCAis_GSTk"/>
</dbReference>
<dbReference type="InterPro" id="IPR036249">
    <property type="entry name" value="Thioredoxin-like_sf"/>
</dbReference>
<dbReference type="PANTHER" id="PTHR42943">
    <property type="entry name" value="GLUTATHIONE S-TRANSFERASE KAPPA"/>
    <property type="match status" value="1"/>
</dbReference>
<dbReference type="PANTHER" id="PTHR42943:SF2">
    <property type="entry name" value="GLUTATHIONE S-TRANSFERASE KAPPA 1"/>
    <property type="match status" value="1"/>
</dbReference>
<dbReference type="Pfam" id="PF01323">
    <property type="entry name" value="DSBA"/>
    <property type="match status" value="1"/>
</dbReference>
<dbReference type="PIRSF" id="PIRSF006386">
    <property type="entry name" value="HCCAis_GSTk"/>
    <property type="match status" value="1"/>
</dbReference>
<dbReference type="SUPFAM" id="SSF52833">
    <property type="entry name" value="Thioredoxin-like"/>
    <property type="match status" value="1"/>
</dbReference>
<accession>Q9Y2Q3</accession>
<accession>B4DIH1</accession>
<accession>B4DSY2</accession>
<accession>Q6P4H0</accession>
<accession>Q7Z520</accession>
<accession>Q9P1S4</accession>
<feature type="chain" id="PRO_0000185891" description="Glutathione S-transferase kappa 1">
    <location>
        <begin position="1"/>
        <end position="226"/>
    </location>
</feature>
<feature type="binding site" evidence="4">
    <location>
        <begin position="16"/>
        <end position="18"/>
    </location>
    <ligand>
        <name>glutathione</name>
        <dbReference type="ChEBI" id="CHEBI:57925"/>
    </ligand>
</feature>
<feature type="binding site" evidence="4">
    <location>
        <position position="53"/>
    </location>
    <ligand>
        <name>glutathione</name>
        <dbReference type="ChEBI" id="CHEBI:57925"/>
    </ligand>
</feature>
<feature type="binding site" evidence="4">
    <location>
        <position position="183"/>
    </location>
    <ligand>
        <name>glutathione</name>
        <dbReference type="ChEBI" id="CHEBI:57925"/>
    </ligand>
</feature>
<feature type="binding site" evidence="4">
    <location>
        <begin position="200"/>
        <end position="201"/>
    </location>
    <ligand>
        <name>glutathione</name>
        <dbReference type="ChEBI" id="CHEBI:57925"/>
    </ligand>
</feature>
<feature type="modified residue" description="N6-succinyllysine" evidence="1">
    <location>
        <position position="49"/>
    </location>
</feature>
<feature type="modified residue" description="N6-acetyllysine" evidence="8">
    <location>
        <position position="71"/>
    </location>
</feature>
<feature type="modified residue" description="N6-acetyllysine" evidence="1">
    <location>
        <position position="85"/>
    </location>
</feature>
<feature type="modified residue" description="N6-acetyllysine; alternate" evidence="1">
    <location>
        <position position="116"/>
    </location>
</feature>
<feature type="modified residue" description="N6-succinyllysine; alternate" evidence="1">
    <location>
        <position position="116"/>
    </location>
</feature>
<feature type="modified residue" description="N6-succinyllysine" evidence="1">
    <location>
        <position position="144"/>
    </location>
</feature>
<feature type="modified residue" description="N6-acetyllysine; alternate" evidence="1">
    <location>
        <position position="158"/>
    </location>
</feature>
<feature type="modified residue" description="N6-succinyllysine; alternate" evidence="1">
    <location>
        <position position="158"/>
    </location>
</feature>
<feature type="modified residue" description="N6-acetyllysine" evidence="1">
    <location>
        <position position="165"/>
    </location>
</feature>
<feature type="modified residue" description="N6-acetyllysine" evidence="8">
    <location>
        <position position="169"/>
    </location>
</feature>
<feature type="splice variant" id="VSP_040978" description="In isoform 4." evidence="5">
    <location>
        <begin position="52"/>
        <end position="94"/>
    </location>
</feature>
<feature type="splice variant" id="VSP_040025" description="In isoform 2." evidence="5 6">
    <original>R</original>
    <variation>RVSVGLWESSGRTLDDFLTFPRHVFRVMILPPPGGSTVLPVTPLSPHRLPAVFSSSQ</variation>
    <location>
        <position position="128"/>
    </location>
</feature>
<feature type="splice variant" id="VSP_040979" description="In isoform 3." evidence="5">
    <location>
        <begin position="129"/>
        <end position="140"/>
    </location>
</feature>
<feature type="sequence conflict" description="In Ref. 6; BAG61794." evidence="7" ref="6">
    <original>S</original>
    <variation>R</variation>
    <location>
        <position position="51"/>
    </location>
</feature>
<feature type="sequence conflict" description="In Ref. 6; BAG61794." evidence="7" ref="6">
    <original>T</original>
    <variation>A</variation>
    <location>
        <position position="171"/>
    </location>
</feature>
<feature type="sequence conflict" description="In Ref. 4; AAF65506." evidence="7" ref="4">
    <original>G</original>
    <variation>R</variation>
    <location>
        <position position="179"/>
    </location>
</feature>
<feature type="sequence conflict" description="In Ref. 5; AAP97160." evidence="7" ref="5">
    <original>L</original>
    <variation>V</variation>
    <location>
        <position position="206"/>
    </location>
</feature>
<feature type="sequence conflict" description="In Ref. 4; AAF65506." evidence="7" ref="4">
    <original>P</original>
    <variation>S</variation>
    <location>
        <position position="220"/>
    </location>
</feature>
<feature type="strand" evidence="9">
    <location>
        <begin position="6"/>
        <end position="12"/>
    </location>
</feature>
<feature type="helix" evidence="9">
    <location>
        <begin position="17"/>
        <end position="29"/>
    </location>
</feature>
<feature type="turn" evidence="9">
    <location>
        <begin position="30"/>
        <end position="32"/>
    </location>
</feature>
<feature type="strand" evidence="9">
    <location>
        <begin position="33"/>
        <end position="41"/>
    </location>
</feature>
<feature type="helix" evidence="9">
    <location>
        <begin position="44"/>
        <end position="47"/>
    </location>
</feature>
<feature type="strand" evidence="9">
    <location>
        <begin position="57"/>
        <end position="59"/>
    </location>
</feature>
<feature type="helix" evidence="9">
    <location>
        <begin position="61"/>
        <end position="77"/>
    </location>
</feature>
<feature type="helix" evidence="9">
    <location>
        <begin position="88"/>
        <end position="94"/>
    </location>
</feature>
<feature type="helix" evidence="9">
    <location>
        <begin position="97"/>
        <end position="109"/>
    </location>
</feature>
<feature type="helix" evidence="9">
    <location>
        <begin position="111"/>
        <end position="113"/>
    </location>
</feature>
<feature type="helix" evidence="9">
    <location>
        <begin position="114"/>
        <end position="126"/>
    </location>
</feature>
<feature type="helix" evidence="9">
    <location>
        <begin position="135"/>
        <end position="144"/>
    </location>
</feature>
<feature type="helix" evidence="9">
    <location>
        <begin position="149"/>
        <end position="156"/>
    </location>
</feature>
<feature type="turn" evidence="9">
    <location>
        <begin position="157"/>
        <end position="160"/>
    </location>
</feature>
<feature type="helix" evidence="9">
    <location>
        <begin position="162"/>
        <end position="177"/>
    </location>
</feature>
<feature type="strand" evidence="9">
    <location>
        <begin position="181"/>
        <end position="183"/>
    </location>
</feature>
<feature type="strand" evidence="9">
    <location>
        <begin position="185"/>
        <end position="190"/>
    </location>
</feature>
<feature type="strand" evidence="9">
    <location>
        <begin position="193"/>
        <end position="201"/>
    </location>
</feature>
<feature type="helix" evidence="9">
    <location>
        <begin position="203"/>
        <end position="210"/>
    </location>
</feature>
<protein>
    <recommendedName>
        <fullName>Glutathione S-transferase kappa 1</fullName>
        <ecNumber evidence="2 3">2.5.1.18</ecNumber>
    </recommendedName>
    <alternativeName>
        <fullName>GST 13-13</fullName>
    </alternativeName>
    <alternativeName>
        <fullName>GST class-kappa</fullName>
    </alternativeName>
    <alternativeName>
        <fullName>GSTK1-1</fullName>
        <shortName>hGSTK1</shortName>
    </alternativeName>
    <alternativeName>
        <fullName>Glutathione S-transferase subunit 13</fullName>
    </alternativeName>
</protein>
<sequence>MGPLPRTVELFYDVLSPYSWLGFEILCRYQNIWNINLQLRPSLITGIMKDSGNKPPGLLPRKGLYMANDLKLLRHHLQIPIHFPKDFLSVMLEKGSLSAMRFLTAVNLEHPEMLEKASRELWMRVWSRNEDITEPQSILAAAEKAGMSAEQAQGLLEKIATPKVKNQLKETTEAACRYGAFGLPITVAHVDGQTHMLFGSDRMELLAHLLGEKWMGPIPPAVNARL</sequence>